<accession>A7Z064</accession>
<accession>F1MMP6</accession>
<proteinExistence type="evidence at transcript level"/>
<dbReference type="EC" id="1.1.1.34" evidence="2"/>
<dbReference type="EMBL" id="DAAA02027738">
    <property type="status" value="NOT_ANNOTATED_CDS"/>
    <property type="molecule type" value="Genomic_DNA"/>
</dbReference>
<dbReference type="EMBL" id="BC153262">
    <property type="protein sequence ID" value="AAI53263.1"/>
    <property type="molecule type" value="mRNA"/>
</dbReference>
<dbReference type="RefSeq" id="NP_001099083.1">
    <property type="nucleotide sequence ID" value="NM_001105613.1"/>
</dbReference>
<dbReference type="SMR" id="A7Z064"/>
<dbReference type="FunCoup" id="A7Z064">
    <property type="interactions" value="1587"/>
</dbReference>
<dbReference type="STRING" id="9913.ENSBTAP00000010315"/>
<dbReference type="GlyCosmos" id="A7Z064">
    <property type="glycosylation" value="2 sites, No reported glycans"/>
</dbReference>
<dbReference type="GlyGen" id="A7Z064">
    <property type="glycosylation" value="2 sites"/>
</dbReference>
<dbReference type="PaxDb" id="9913-ENSBTAP00000010315"/>
<dbReference type="Ensembl" id="ENSBTAT00000010315.6">
    <property type="protein sequence ID" value="ENSBTAP00000010315.4"/>
    <property type="gene ID" value="ENSBTAG00000007840.6"/>
</dbReference>
<dbReference type="GeneID" id="407159"/>
<dbReference type="KEGG" id="bta:407159"/>
<dbReference type="CTD" id="3156"/>
<dbReference type="VEuPathDB" id="HostDB:ENSBTAG00000007840"/>
<dbReference type="VGNC" id="VGNC:29879">
    <property type="gene designation" value="HMGCR"/>
</dbReference>
<dbReference type="eggNOG" id="KOG2480">
    <property type="taxonomic scope" value="Eukaryota"/>
</dbReference>
<dbReference type="GeneTree" id="ENSGT00940000155305"/>
<dbReference type="HOGENOM" id="CLU_001734_0_1_1"/>
<dbReference type="InParanoid" id="A7Z064"/>
<dbReference type="OMA" id="DCHIAMD"/>
<dbReference type="OrthoDB" id="310654at2759"/>
<dbReference type="TreeFam" id="TF105362"/>
<dbReference type="Reactome" id="R-BTA-191273">
    <property type="pathway name" value="Cholesterol biosynthesis"/>
</dbReference>
<dbReference type="UniPathway" id="UPA00058">
    <property type="reaction ID" value="UER00103"/>
</dbReference>
<dbReference type="Proteomes" id="UP000009136">
    <property type="component" value="Chromosome 10"/>
</dbReference>
<dbReference type="Bgee" id="ENSBTAG00000007840">
    <property type="expression patterns" value="Expressed in diaphragm and 103 other cell types or tissues"/>
</dbReference>
<dbReference type="GO" id="GO:0005783">
    <property type="term" value="C:endoplasmic reticulum"/>
    <property type="evidence" value="ECO:0000250"/>
    <property type="project" value="UniProtKB"/>
</dbReference>
<dbReference type="GO" id="GO:0005789">
    <property type="term" value="C:endoplasmic reticulum membrane"/>
    <property type="evidence" value="ECO:0000318"/>
    <property type="project" value="GO_Central"/>
</dbReference>
<dbReference type="GO" id="GO:0005778">
    <property type="term" value="C:peroxisomal membrane"/>
    <property type="evidence" value="ECO:0000250"/>
    <property type="project" value="UniProtKB"/>
</dbReference>
<dbReference type="GO" id="GO:0120225">
    <property type="term" value="F:coenzyme A binding"/>
    <property type="evidence" value="ECO:0007669"/>
    <property type="project" value="Ensembl"/>
</dbReference>
<dbReference type="GO" id="GO:0030695">
    <property type="term" value="F:GTPase regulator activity"/>
    <property type="evidence" value="ECO:0007669"/>
    <property type="project" value="Ensembl"/>
</dbReference>
<dbReference type="GO" id="GO:0004420">
    <property type="term" value="F:hydroxymethylglutaryl-CoA reductase (NADPH) activity"/>
    <property type="evidence" value="ECO:0000318"/>
    <property type="project" value="GO_Central"/>
</dbReference>
<dbReference type="GO" id="GO:0070402">
    <property type="term" value="F:NADPH binding"/>
    <property type="evidence" value="ECO:0007669"/>
    <property type="project" value="Ensembl"/>
</dbReference>
<dbReference type="GO" id="GO:0006695">
    <property type="term" value="P:cholesterol biosynthetic process"/>
    <property type="evidence" value="ECO:0007669"/>
    <property type="project" value="UniProtKB-KW"/>
</dbReference>
<dbReference type="GO" id="GO:0015936">
    <property type="term" value="P:coenzyme A metabolic process"/>
    <property type="evidence" value="ECO:0007669"/>
    <property type="project" value="InterPro"/>
</dbReference>
<dbReference type="GO" id="GO:0008299">
    <property type="term" value="P:isoprenoid biosynthetic process"/>
    <property type="evidence" value="ECO:0000318"/>
    <property type="project" value="GO_Central"/>
</dbReference>
<dbReference type="GO" id="GO:0060291">
    <property type="term" value="P:long-term synaptic potentiation"/>
    <property type="evidence" value="ECO:0007669"/>
    <property type="project" value="Ensembl"/>
</dbReference>
<dbReference type="GO" id="GO:1900222">
    <property type="term" value="P:negative regulation of amyloid-beta clearance"/>
    <property type="evidence" value="ECO:0007669"/>
    <property type="project" value="Ensembl"/>
</dbReference>
<dbReference type="GO" id="GO:0042177">
    <property type="term" value="P:negative regulation of protein catabolic process"/>
    <property type="evidence" value="ECO:0007669"/>
    <property type="project" value="Ensembl"/>
</dbReference>
<dbReference type="GO" id="GO:0050709">
    <property type="term" value="P:negative regulation of protein secretion"/>
    <property type="evidence" value="ECO:0007669"/>
    <property type="project" value="Ensembl"/>
</dbReference>
<dbReference type="GO" id="GO:0070372">
    <property type="term" value="P:regulation of ERK1 and ERK2 cascade"/>
    <property type="evidence" value="ECO:0007669"/>
    <property type="project" value="Ensembl"/>
</dbReference>
<dbReference type="GO" id="GO:0016126">
    <property type="term" value="P:sterol biosynthetic process"/>
    <property type="evidence" value="ECO:0000318"/>
    <property type="project" value="GO_Central"/>
</dbReference>
<dbReference type="GO" id="GO:0008542">
    <property type="term" value="P:visual learning"/>
    <property type="evidence" value="ECO:0007669"/>
    <property type="project" value="Ensembl"/>
</dbReference>
<dbReference type="CDD" id="cd00643">
    <property type="entry name" value="HMG-CoA_reductase_classI"/>
    <property type="match status" value="1"/>
</dbReference>
<dbReference type="FunFam" id="1.10.3270.10:FF:000001">
    <property type="entry name" value="3-hydroxy-3-methylglutaryl coenzyme A reductase"/>
    <property type="match status" value="1"/>
</dbReference>
<dbReference type="FunFam" id="3.30.70.420:FF:000001">
    <property type="entry name" value="3-hydroxy-3-methylglutaryl coenzyme A reductase"/>
    <property type="match status" value="1"/>
</dbReference>
<dbReference type="FunFam" id="3.90.770.10:FF:000002">
    <property type="entry name" value="3-hydroxy-3-methylglutaryl coenzyme A reductase"/>
    <property type="match status" value="1"/>
</dbReference>
<dbReference type="Gene3D" id="3.90.770.10">
    <property type="entry name" value="3-hydroxy-3-methylglutaryl-coenzyme A Reductase, Chain A, domain 2"/>
    <property type="match status" value="1"/>
</dbReference>
<dbReference type="Gene3D" id="1.10.3270.10">
    <property type="entry name" value="HMGR, N-terminal domain"/>
    <property type="match status" value="1"/>
</dbReference>
<dbReference type="Gene3D" id="3.30.70.420">
    <property type="entry name" value="Hydroxymethylglutaryl-CoA reductase, class I/II, NAD/NADP-binding domain"/>
    <property type="match status" value="1"/>
</dbReference>
<dbReference type="InterPro" id="IPR002202">
    <property type="entry name" value="HMG_CoA_Rdtase"/>
</dbReference>
<dbReference type="InterPro" id="IPR023074">
    <property type="entry name" value="HMG_CoA_Rdtase_cat_sf"/>
</dbReference>
<dbReference type="InterPro" id="IPR023076">
    <property type="entry name" value="HMG_CoA_Rdtase_CS"/>
</dbReference>
<dbReference type="InterPro" id="IPR004554">
    <property type="entry name" value="HMG_CoA_Rdtase_eu_arc"/>
</dbReference>
<dbReference type="InterPro" id="IPR004816">
    <property type="entry name" value="HMG_CoA_Rdtase_metazoan"/>
</dbReference>
<dbReference type="InterPro" id="IPR023282">
    <property type="entry name" value="HMG_CoA_Rdtase_N"/>
</dbReference>
<dbReference type="InterPro" id="IPR009023">
    <property type="entry name" value="HMG_CoA_Rdtase_NAD(P)-bd_sf"/>
</dbReference>
<dbReference type="InterPro" id="IPR009029">
    <property type="entry name" value="HMG_CoA_Rdtase_sub-bd_dom_sf"/>
</dbReference>
<dbReference type="InterPro" id="IPR053958">
    <property type="entry name" value="HMGCR/SNAP/NPC1-like_SSD"/>
</dbReference>
<dbReference type="InterPro" id="IPR000731">
    <property type="entry name" value="SSD"/>
</dbReference>
<dbReference type="NCBIfam" id="TIGR00920">
    <property type="entry name" value="2A060605"/>
    <property type="match status" value="1"/>
</dbReference>
<dbReference type="NCBIfam" id="TIGR00533">
    <property type="entry name" value="HMG_CoA_R_NADP"/>
    <property type="match status" value="1"/>
</dbReference>
<dbReference type="PANTHER" id="PTHR10572">
    <property type="entry name" value="3-HYDROXY-3-METHYLGLUTARYL-COENZYME A REDUCTASE"/>
    <property type="match status" value="1"/>
</dbReference>
<dbReference type="PANTHER" id="PTHR10572:SF24">
    <property type="entry name" value="3-HYDROXY-3-METHYLGLUTARYL-COENZYME A REDUCTASE"/>
    <property type="match status" value="1"/>
</dbReference>
<dbReference type="Pfam" id="PF00368">
    <property type="entry name" value="HMG-CoA_red"/>
    <property type="match status" value="1"/>
</dbReference>
<dbReference type="Pfam" id="PF12349">
    <property type="entry name" value="Sterol-sensing"/>
    <property type="match status" value="1"/>
</dbReference>
<dbReference type="PRINTS" id="PR00071">
    <property type="entry name" value="HMGCOARDTASE"/>
</dbReference>
<dbReference type="SUPFAM" id="SSF55035">
    <property type="entry name" value="NAD-binding domain of HMG-CoA reductase"/>
    <property type="match status" value="1"/>
</dbReference>
<dbReference type="SUPFAM" id="SSF56542">
    <property type="entry name" value="Substrate-binding domain of HMG-CoA reductase"/>
    <property type="match status" value="1"/>
</dbReference>
<dbReference type="PROSITE" id="PS00066">
    <property type="entry name" value="HMG_COA_REDUCTASE_1"/>
    <property type="match status" value="1"/>
</dbReference>
<dbReference type="PROSITE" id="PS00318">
    <property type="entry name" value="HMG_COA_REDUCTASE_2"/>
    <property type="match status" value="1"/>
</dbReference>
<dbReference type="PROSITE" id="PS01192">
    <property type="entry name" value="HMG_COA_REDUCTASE_3"/>
    <property type="match status" value="1"/>
</dbReference>
<dbReference type="PROSITE" id="PS50065">
    <property type="entry name" value="HMG_COA_REDUCTASE_4"/>
    <property type="match status" value="1"/>
</dbReference>
<dbReference type="PROSITE" id="PS50156">
    <property type="entry name" value="SSD"/>
    <property type="match status" value="1"/>
</dbReference>
<protein>
    <recommendedName>
        <fullName>3-hydroxy-3-methylglutaryl-coenzyme A reductase</fullName>
        <shortName>HMG-CoA reductase</shortName>
        <ecNumber evidence="2">1.1.1.34</ecNumber>
    </recommendedName>
</protein>
<reference key="1">
    <citation type="journal article" date="2009" name="Genome Biol.">
        <title>A whole-genome assembly of the domestic cow, Bos taurus.</title>
        <authorList>
            <person name="Zimin A.V."/>
            <person name="Delcher A.L."/>
            <person name="Florea L."/>
            <person name="Kelley D.R."/>
            <person name="Schatz M.C."/>
            <person name="Puiu D."/>
            <person name="Hanrahan F."/>
            <person name="Pertea G."/>
            <person name="Van Tassell C.P."/>
            <person name="Sonstegard T.S."/>
            <person name="Marcais G."/>
            <person name="Roberts M."/>
            <person name="Subramanian P."/>
            <person name="Yorke J.A."/>
            <person name="Salzberg S.L."/>
        </authorList>
    </citation>
    <scope>NUCLEOTIDE SEQUENCE [LARGE SCALE GENOMIC DNA]</scope>
    <source>
        <strain>Hereford</strain>
    </source>
</reference>
<reference key="2">
    <citation type="submission" date="2007-09" db="EMBL/GenBank/DDBJ databases">
        <authorList>
            <consortium name="NIH - Mammalian Gene Collection (MGC) project"/>
        </authorList>
    </citation>
    <scope>NUCLEOTIDE SEQUENCE [LARGE SCALE MRNA]</scope>
    <source>
        <strain>Hereford</strain>
        <tissue>Hippocampus</tissue>
    </source>
</reference>
<feature type="chain" id="PRO_0000417950" description="3-hydroxy-3-methylglutaryl-coenzyme A reductase">
    <location>
        <begin position="1"/>
        <end position="888"/>
    </location>
</feature>
<feature type="topological domain" description="Cytoplasmic" evidence="1">
    <location>
        <begin position="1"/>
        <end position="9"/>
    </location>
</feature>
<feature type="transmembrane region" description="Helical" evidence="1">
    <location>
        <begin position="10"/>
        <end position="39"/>
    </location>
</feature>
<feature type="topological domain" description="Lumenal" evidence="1">
    <location>
        <begin position="40"/>
        <end position="56"/>
    </location>
</feature>
<feature type="transmembrane region" description="Helical" evidence="1">
    <location>
        <begin position="57"/>
        <end position="78"/>
    </location>
</feature>
<feature type="topological domain" description="Cytoplasmic" evidence="1">
    <location>
        <begin position="79"/>
        <end position="89"/>
    </location>
</feature>
<feature type="transmembrane region" description="Helical" evidence="1">
    <location>
        <begin position="90"/>
        <end position="114"/>
    </location>
</feature>
<feature type="topological domain" description="Lumenal" evidence="1">
    <location>
        <begin position="115"/>
        <end position="123"/>
    </location>
</feature>
<feature type="transmembrane region" description="Helical" evidence="1">
    <location>
        <begin position="124"/>
        <end position="149"/>
    </location>
</feature>
<feature type="topological domain" description="Cytoplasmic" evidence="1">
    <location>
        <begin position="150"/>
        <end position="159"/>
    </location>
</feature>
<feature type="transmembrane region" description="Helical" evidence="1">
    <location>
        <begin position="160"/>
        <end position="187"/>
    </location>
</feature>
<feature type="topological domain" description="Lumenal" evidence="1">
    <location>
        <begin position="188"/>
        <end position="191"/>
    </location>
</feature>
<feature type="transmembrane region" description="Helical" evidence="1">
    <location>
        <begin position="192"/>
        <end position="220"/>
    </location>
</feature>
<feature type="topological domain" description="Cytoplasmic" evidence="1">
    <location>
        <begin position="221"/>
        <end position="248"/>
    </location>
</feature>
<feature type="transmembrane region" description="Helical" evidence="1">
    <location>
        <begin position="249"/>
        <end position="275"/>
    </location>
</feature>
<feature type="topological domain" description="Lumenal" evidence="1">
    <location>
        <begin position="276"/>
        <end position="314"/>
    </location>
</feature>
<feature type="transmembrane region" description="Helical" evidence="1">
    <location>
        <begin position="315"/>
        <end position="339"/>
    </location>
</feature>
<feature type="topological domain" description="Cytoplasmic" evidence="1">
    <location>
        <begin position="340"/>
        <end position="888"/>
    </location>
</feature>
<feature type="domain" description="SSD" evidence="5">
    <location>
        <begin position="61"/>
        <end position="218"/>
    </location>
</feature>
<feature type="short sequence motif" description="INSIG-binding motif" evidence="2">
    <location>
        <begin position="75"/>
        <end position="78"/>
    </location>
</feature>
<feature type="active site" description="Charge relay system" evidence="2">
    <location>
        <position position="559"/>
    </location>
</feature>
<feature type="active site" description="Charge relay system" evidence="2">
    <location>
        <position position="691"/>
    </location>
</feature>
<feature type="active site" description="Charge relay system" evidence="2">
    <location>
        <position position="767"/>
    </location>
</feature>
<feature type="active site" description="Proton donor" evidence="6">
    <location>
        <position position="866"/>
    </location>
</feature>
<feature type="modified residue" description="Phosphoserine; by AMPK" evidence="3">
    <location>
        <position position="872"/>
    </location>
</feature>
<feature type="glycosylation site" description="N-linked (GlcNAc...) asparagine" evidence="4">
    <location>
        <position position="281"/>
    </location>
</feature>
<feature type="glycosylation site" description="N-linked (GlcNAc...) asparagine" evidence="4">
    <location>
        <position position="296"/>
    </location>
</feature>
<feature type="cross-link" description="Glycyl lysine isopeptide (Lys-Gly) (interchain with G-Cter in ubiquitin)" evidence="1">
    <location>
        <position position="89"/>
    </location>
</feature>
<feature type="cross-link" description="Glycyl lysine isopeptide (Lys-Gly) (interchain with G-Cter in ubiquitin)" evidence="1">
    <location>
        <position position="248"/>
    </location>
</feature>
<feature type="sequence conflict" description="In Ref. 2; AAI53263." evidence="7" ref="2">
    <original>F</original>
    <variation>V</variation>
    <location>
        <position position="628"/>
    </location>
</feature>
<gene>
    <name type="primary">HMGCR</name>
</gene>
<keyword id="KW-0152">Cholesterol biosynthesis</keyword>
<keyword id="KW-0153">Cholesterol metabolism</keyword>
<keyword id="KW-0256">Endoplasmic reticulum</keyword>
<keyword id="KW-0325">Glycoprotein</keyword>
<keyword id="KW-1017">Isopeptide bond</keyword>
<keyword id="KW-0444">Lipid biosynthesis</keyword>
<keyword id="KW-0443">Lipid metabolism</keyword>
<keyword id="KW-0472">Membrane</keyword>
<keyword id="KW-0521">NADP</keyword>
<keyword id="KW-0560">Oxidoreductase</keyword>
<keyword id="KW-0576">Peroxisome</keyword>
<keyword id="KW-0597">Phosphoprotein</keyword>
<keyword id="KW-1185">Reference proteome</keyword>
<keyword id="KW-0752">Steroid biosynthesis</keyword>
<keyword id="KW-0753">Steroid metabolism</keyword>
<keyword id="KW-0756">Sterol biosynthesis</keyword>
<keyword id="KW-1207">Sterol metabolism</keyword>
<keyword id="KW-0812">Transmembrane</keyword>
<keyword id="KW-1133">Transmembrane helix</keyword>
<keyword id="KW-0832">Ubl conjugation</keyword>
<evidence type="ECO:0000250" key="1">
    <source>
        <dbReference type="UniProtKB" id="P00347"/>
    </source>
</evidence>
<evidence type="ECO:0000250" key="2">
    <source>
        <dbReference type="UniProtKB" id="P04035"/>
    </source>
</evidence>
<evidence type="ECO:0000250" key="3">
    <source>
        <dbReference type="UniProtKB" id="P51639"/>
    </source>
</evidence>
<evidence type="ECO:0000255" key="4"/>
<evidence type="ECO:0000255" key="5">
    <source>
        <dbReference type="PROSITE-ProRule" id="PRU00199"/>
    </source>
</evidence>
<evidence type="ECO:0000255" key="6">
    <source>
        <dbReference type="PROSITE-ProRule" id="PRU10003"/>
    </source>
</evidence>
<evidence type="ECO:0000305" key="7"/>
<comment type="function">
    <text evidence="2">Catalyzes the conversion of (3S)-hydroxy-3-methylglutaryl-CoA (HMG-CoA) to mevalonic acid, the rate-limiting step in the synthesis of cholesterol and other isoprenoids, thus plays a critical role in cellular cholesterol homeostasis.</text>
</comment>
<comment type="catalytic activity">
    <reaction evidence="2">
        <text>(R)-mevalonate + 2 NADP(+) + CoA = (3S)-3-hydroxy-3-methylglutaryl-CoA + 2 NADPH + 2 H(+)</text>
        <dbReference type="Rhea" id="RHEA:15989"/>
        <dbReference type="ChEBI" id="CHEBI:15378"/>
        <dbReference type="ChEBI" id="CHEBI:36464"/>
        <dbReference type="ChEBI" id="CHEBI:43074"/>
        <dbReference type="ChEBI" id="CHEBI:57287"/>
        <dbReference type="ChEBI" id="CHEBI:57783"/>
        <dbReference type="ChEBI" id="CHEBI:58349"/>
        <dbReference type="EC" id="1.1.1.34"/>
    </reaction>
    <physiologicalReaction direction="right-to-left" evidence="2">
        <dbReference type="Rhea" id="RHEA:15991"/>
    </physiologicalReaction>
</comment>
<comment type="activity regulation">
    <text evidence="1 2">Regulated by a negative feedback mechanism through sterols and non-sterol metabolites derived from mevalonate (By similarity). Phosphorylation at Ser-872 down-regulates the catalytic activity (By similarity).</text>
</comment>
<comment type="pathway">
    <text>Metabolic intermediate biosynthesis; (R)-mevalonate biosynthesis; (R)-mevalonate from acetyl-CoA: step 3/3.</text>
</comment>
<comment type="subunit">
    <text evidence="2">Homotetramer. Homodimer (By similarity). Interacts (via its SSD) with INSIG1; the interaction, accelerated by sterols, leads to the recruitment of HMGCR to AMFR/gp78 for its ubiquitination by the sterol-mediated ERAD pathway. Interacts with UBIAD1 (By similarity).</text>
</comment>
<comment type="subcellular location">
    <subcellularLocation>
        <location evidence="2">Endoplasmic reticulum membrane</location>
        <topology evidence="1">Multi-pass membrane protein</topology>
    </subcellularLocation>
    <subcellularLocation>
        <location evidence="2">Peroxisome membrane</location>
        <topology evidence="1">Multi-pass membrane protein</topology>
    </subcellularLocation>
</comment>
<comment type="PTM">
    <text evidence="2">Undergoes sterol-mediated ubiquitination and ER-associated degradation (ERAD). Accumulation of sterols in the endoplasmic reticulum (ER) membrane, triggers binding of the reductase to the ER membrane protein INSIG1 or INSIG2. The INSIG1 binding leads to the recruitment of the ubiquitin ligase, AMFR/gp78, RNF139 or RNF145, initiating ubiquitination of the reductase. The ubiquitinated reductase is then extracted from the ER membrane and delivered to cytosolic 26S proteosomes by a mechanism probably mediated by the ATPase Valosin-containing protein VCP/p97. The INSIG2-binding leads to the recruitment of the ubiquitin ligase RNF139, initiating ubiquitination of the reductase. Lys-248 is the main site of ubiquitination. Ubiquitination is enhanced by the presence of a geranylgeranylated protein.</text>
</comment>
<comment type="PTM">
    <text evidence="2">N-glycosylated. Deglycosylated by NGLY1 on release from the endoplasmic reticulum (ER) in a sterol-mediated manner.</text>
</comment>
<comment type="PTM">
    <text evidence="1">Phosphorylated. Phosphorylation at Ser-872 reduces the catalytic activity.</text>
</comment>
<comment type="similarity">
    <text evidence="7">Belongs to the HMG-CoA reductase family.</text>
</comment>
<sequence>MLSRLFRMHGLFVASHPWEVIVGTVTLTICMMSMNMFTGNNKICGWNYECPKLEEDVLSSDIIILTITRCIAILYIYFQFQNLRQLGSKYILGIAGLFTIFSSFVFSTVVIHFLDKELTGLNEALPFFLLLVDLSRASALAKFALSSNSQDEVRENIARGMAILGPTFTLDALVECLVIGVGTMSGVRQLEIMCCFGCMSVLANYFVFMTFFPACVSLVLELSRESREGRPIWQLSHFARVLEEEENKPNPVTQRVKMIMSLGLVLVHAHSRWIADPSPQNSTADNSKVSLGLDENVSKRIEPSVSLWQFYLSKMISMDIEQVITLSLALLLAVKYIFFEQAETESTLSLKNPITSPVVTQKKITDDCCRRDPVLVRNDQKFHAMEEETRKNRERKVEVIKPLLAENDTSHRATFVVGNSSLLGTSLELETQEPEMELPVEPRPNEECLQILENAEKGAKFLSDAEIIQLVNAKHIPAYKLETLMETHERGVSIRRQLLSKKLPEPSSLQYLPYRDYNYSLVMGACCENVIGYMPIPVGVAGPLCLDGKEFQVPMATTEGCLVASTNRGCRAIGLGGGASSRVLADGMTRGPVVRFPRACDSAEVKAWLETPEGFTVIKEAFDSTSRFARLQKLHMSVAGRNLYIRFQSRSGDAMGMNMISKGTEKALSKLQEYFPEMQILAVSGNYCTDKKPAAINWIEGRGKSVVCEAVIPAKVVREVLKTTTEAMIEVNINKNLVGSAMAGSIGGYNAHAANIVTAIYIACGQDAAQNVGSSNCITLMEASGPTNEDLYISCTMPSIEIGTVGGGTNLLPQQACLQMLGVQGACRDNPGENARQLARIVCGTVMAGELSLMAALAAGHLVRSHMIHNRSKINLQDLQGTCTKKAA</sequence>
<organism>
    <name type="scientific">Bos taurus</name>
    <name type="common">Bovine</name>
    <dbReference type="NCBI Taxonomy" id="9913"/>
    <lineage>
        <taxon>Eukaryota</taxon>
        <taxon>Metazoa</taxon>
        <taxon>Chordata</taxon>
        <taxon>Craniata</taxon>
        <taxon>Vertebrata</taxon>
        <taxon>Euteleostomi</taxon>
        <taxon>Mammalia</taxon>
        <taxon>Eutheria</taxon>
        <taxon>Laurasiatheria</taxon>
        <taxon>Artiodactyla</taxon>
        <taxon>Ruminantia</taxon>
        <taxon>Pecora</taxon>
        <taxon>Bovidae</taxon>
        <taxon>Bovinae</taxon>
        <taxon>Bos</taxon>
    </lineage>
</organism>
<name>HMDH_BOVIN</name>